<dbReference type="EC" id="1.1.1.37" evidence="1"/>
<dbReference type="EMBL" id="AE001363">
    <property type="protein sequence ID" value="AAD19165.1"/>
    <property type="molecule type" value="Genomic_DNA"/>
</dbReference>
<dbReference type="EMBL" id="AE002161">
    <property type="protein sequence ID" value="AAF38617.1"/>
    <property type="molecule type" value="Genomic_DNA"/>
</dbReference>
<dbReference type="EMBL" id="BA000008">
    <property type="protein sequence ID" value="BAA99235.1"/>
    <property type="molecule type" value="Genomic_DNA"/>
</dbReference>
<dbReference type="EMBL" id="AE009440">
    <property type="protein sequence ID" value="AAP98996.1"/>
    <property type="status" value="ALT_INIT"/>
    <property type="molecule type" value="Genomic_DNA"/>
</dbReference>
<dbReference type="PIR" id="A86619">
    <property type="entry name" value="A86619"/>
</dbReference>
<dbReference type="PIR" id="F72005">
    <property type="entry name" value="F72005"/>
</dbReference>
<dbReference type="RefSeq" id="NP_225222.1">
    <property type="nucleotide sequence ID" value="NC_000922.1"/>
</dbReference>
<dbReference type="RefSeq" id="WP_010883661.1">
    <property type="nucleotide sequence ID" value="NZ_LN847257.1"/>
</dbReference>
<dbReference type="SMR" id="Q9Z6N1"/>
<dbReference type="STRING" id="406984.CPK_ORF00455"/>
<dbReference type="GeneID" id="45051086"/>
<dbReference type="KEGG" id="cpa:CP_0824"/>
<dbReference type="KEGG" id="cpj:mdhC"/>
<dbReference type="KEGG" id="cpn:CPn_1028"/>
<dbReference type="KEGG" id="cpt:CpB1067"/>
<dbReference type="PATRIC" id="fig|115713.3.peg.1126"/>
<dbReference type="eggNOG" id="COG0039">
    <property type="taxonomic scope" value="Bacteria"/>
</dbReference>
<dbReference type="HOGENOM" id="CLU_040727_2_0_0"/>
<dbReference type="OrthoDB" id="9802969at2"/>
<dbReference type="Proteomes" id="UP000000583">
    <property type="component" value="Chromosome"/>
</dbReference>
<dbReference type="Proteomes" id="UP000000801">
    <property type="component" value="Chromosome"/>
</dbReference>
<dbReference type="GO" id="GO:0030060">
    <property type="term" value="F:L-malate dehydrogenase (NAD+) activity"/>
    <property type="evidence" value="ECO:0007669"/>
    <property type="project" value="UniProtKB-UniRule"/>
</dbReference>
<dbReference type="GO" id="GO:0006108">
    <property type="term" value="P:malate metabolic process"/>
    <property type="evidence" value="ECO:0007669"/>
    <property type="project" value="InterPro"/>
</dbReference>
<dbReference type="GO" id="GO:0006099">
    <property type="term" value="P:tricarboxylic acid cycle"/>
    <property type="evidence" value="ECO:0007669"/>
    <property type="project" value="UniProtKB-UniRule"/>
</dbReference>
<dbReference type="CDD" id="cd01338">
    <property type="entry name" value="MDH_chloroplast-like"/>
    <property type="match status" value="1"/>
</dbReference>
<dbReference type="FunFam" id="3.40.50.720:FF:000010">
    <property type="entry name" value="Malate dehydrogenase"/>
    <property type="match status" value="1"/>
</dbReference>
<dbReference type="FunFam" id="3.90.110.10:FF:000002">
    <property type="entry name" value="Malate dehydrogenase"/>
    <property type="match status" value="1"/>
</dbReference>
<dbReference type="Gene3D" id="3.90.110.10">
    <property type="entry name" value="Lactate dehydrogenase/glycoside hydrolase, family 4, C-terminal"/>
    <property type="match status" value="1"/>
</dbReference>
<dbReference type="Gene3D" id="3.40.50.720">
    <property type="entry name" value="NAD(P)-binding Rossmann-like Domain"/>
    <property type="match status" value="1"/>
</dbReference>
<dbReference type="HAMAP" id="MF_01517">
    <property type="entry name" value="Malate_dehydrog_2"/>
    <property type="match status" value="1"/>
</dbReference>
<dbReference type="InterPro" id="IPR001557">
    <property type="entry name" value="L-lactate/malate_DH"/>
</dbReference>
<dbReference type="InterPro" id="IPR022383">
    <property type="entry name" value="Lactate/malate_DH_C"/>
</dbReference>
<dbReference type="InterPro" id="IPR001236">
    <property type="entry name" value="Lactate/malate_DH_N"/>
</dbReference>
<dbReference type="InterPro" id="IPR015955">
    <property type="entry name" value="Lactate_DH/Glyco_Ohase_4_C"/>
</dbReference>
<dbReference type="InterPro" id="IPR010945">
    <property type="entry name" value="Malate_DH_type2"/>
</dbReference>
<dbReference type="InterPro" id="IPR036291">
    <property type="entry name" value="NAD(P)-bd_dom_sf"/>
</dbReference>
<dbReference type="NCBIfam" id="TIGR01759">
    <property type="entry name" value="MalateDH-SF1"/>
    <property type="match status" value="1"/>
</dbReference>
<dbReference type="NCBIfam" id="NF003916">
    <property type="entry name" value="PRK05442.1"/>
    <property type="match status" value="1"/>
</dbReference>
<dbReference type="PANTHER" id="PTHR23382">
    <property type="entry name" value="MALATE DEHYDROGENASE"/>
    <property type="match status" value="1"/>
</dbReference>
<dbReference type="Pfam" id="PF02866">
    <property type="entry name" value="Ldh_1_C"/>
    <property type="match status" value="1"/>
</dbReference>
<dbReference type="Pfam" id="PF00056">
    <property type="entry name" value="Ldh_1_N"/>
    <property type="match status" value="1"/>
</dbReference>
<dbReference type="PIRSF" id="PIRSF000102">
    <property type="entry name" value="Lac_mal_DH"/>
    <property type="match status" value="1"/>
</dbReference>
<dbReference type="SUPFAM" id="SSF56327">
    <property type="entry name" value="LDH C-terminal domain-like"/>
    <property type="match status" value="1"/>
</dbReference>
<dbReference type="SUPFAM" id="SSF51735">
    <property type="entry name" value="NAD(P)-binding Rossmann-fold domains"/>
    <property type="match status" value="1"/>
</dbReference>
<gene>
    <name evidence="1" type="primary">mdh</name>
    <name type="synonym">mdhC</name>
    <name type="ordered locus">CPn_1028</name>
    <name type="ordered locus">CP_0824</name>
    <name type="ordered locus">CpB1067</name>
</gene>
<protein>
    <recommendedName>
        <fullName evidence="1">Malate dehydrogenase</fullName>
        <ecNumber evidence="1">1.1.1.37</ecNumber>
    </recommendedName>
</protein>
<reference key="1">
    <citation type="journal article" date="1999" name="Nat. Genet.">
        <title>Comparative genomes of Chlamydia pneumoniae and C. trachomatis.</title>
        <authorList>
            <person name="Kalman S."/>
            <person name="Mitchell W.P."/>
            <person name="Marathe R."/>
            <person name="Lammel C.J."/>
            <person name="Fan J."/>
            <person name="Hyman R.W."/>
            <person name="Olinger L."/>
            <person name="Grimwood J."/>
            <person name="Davis R.W."/>
            <person name="Stephens R.S."/>
        </authorList>
    </citation>
    <scope>NUCLEOTIDE SEQUENCE [LARGE SCALE GENOMIC DNA]</scope>
    <source>
        <strain>CWL029</strain>
    </source>
</reference>
<reference key="2">
    <citation type="journal article" date="2000" name="Nucleic Acids Res.">
        <title>Genome sequences of Chlamydia trachomatis MoPn and Chlamydia pneumoniae AR39.</title>
        <authorList>
            <person name="Read T.D."/>
            <person name="Brunham R.C."/>
            <person name="Shen C."/>
            <person name="Gill S.R."/>
            <person name="Heidelberg J.F."/>
            <person name="White O."/>
            <person name="Hickey E.K."/>
            <person name="Peterson J.D."/>
            <person name="Utterback T.R."/>
            <person name="Berry K.J."/>
            <person name="Bass S."/>
            <person name="Linher K.D."/>
            <person name="Weidman J.F."/>
            <person name="Khouri H.M."/>
            <person name="Craven B."/>
            <person name="Bowman C."/>
            <person name="Dodson R.J."/>
            <person name="Gwinn M.L."/>
            <person name="Nelson W.C."/>
            <person name="DeBoy R.T."/>
            <person name="Kolonay J.F."/>
            <person name="McClarty G."/>
            <person name="Salzberg S.L."/>
            <person name="Eisen J.A."/>
            <person name="Fraser C.M."/>
        </authorList>
    </citation>
    <scope>NUCLEOTIDE SEQUENCE [LARGE SCALE GENOMIC DNA]</scope>
    <source>
        <strain>AR39</strain>
    </source>
</reference>
<reference key="3">
    <citation type="journal article" date="2000" name="Nucleic Acids Res.">
        <title>Comparison of whole genome sequences of Chlamydia pneumoniae J138 from Japan and CWL029 from USA.</title>
        <authorList>
            <person name="Shirai M."/>
            <person name="Hirakawa H."/>
            <person name="Kimoto M."/>
            <person name="Tabuchi M."/>
            <person name="Kishi F."/>
            <person name="Ouchi K."/>
            <person name="Shiba T."/>
            <person name="Ishii K."/>
            <person name="Hattori M."/>
            <person name="Kuhara S."/>
            <person name="Nakazawa T."/>
        </authorList>
    </citation>
    <scope>NUCLEOTIDE SEQUENCE [LARGE SCALE GENOMIC DNA]</scope>
    <source>
        <strain>J138</strain>
    </source>
</reference>
<reference key="4">
    <citation type="submission" date="2002-05" db="EMBL/GenBank/DDBJ databases">
        <title>The genome sequence of Chlamydia pneumoniae TW183 and comparison with other Chlamydia strains based on whole genome sequence analysis.</title>
        <authorList>
            <person name="Geng M.M."/>
            <person name="Schuhmacher A."/>
            <person name="Muehldorfer I."/>
            <person name="Bensch K.W."/>
            <person name="Schaefer K.P."/>
            <person name="Schneider S."/>
            <person name="Pohl T."/>
            <person name="Essig A."/>
            <person name="Marre R."/>
            <person name="Melchers K."/>
        </authorList>
    </citation>
    <scope>NUCLEOTIDE SEQUENCE [LARGE SCALE GENOMIC DNA]</scope>
    <source>
        <strain>TW-183</strain>
    </source>
</reference>
<sequence>MAFKEVVRVAVTGGKGQIAYNFLFALAHGDVFGVDRGVDLRIYDVPGTERALSGVRMELDDGAYPLLHRLRVTTSLNDAFDGIDAAFLIGAVPRGPGMERGDLLKQNGQIFSLQGAALNTAAKRDAKIFVVGNPVNTNCWIAMKHAPRLHRKNFHAMLRLDQNRMHSMLAHRAEVPLEEVSRVVIWGNHSAKQVPDFTQARISGKPAAEVIGDRDWLENILVHSVQNRGSAVIEARGKSSAASASRALAEAARSIFCPKSDEWFSSGVCSDHNPYGIPEDLIFGFPCRMLPSGDYEIIPGLPWEPFIRNKIQISLDEIAQEKASVSSL</sequence>
<name>MDH_CHLPN</name>
<feature type="chain" id="PRO_0000113358" description="Malate dehydrogenase">
    <location>
        <begin position="1"/>
        <end position="328"/>
    </location>
</feature>
<feature type="active site" description="Proton acceptor" evidence="1">
    <location>
        <position position="189"/>
    </location>
</feature>
<feature type="binding site" evidence="1">
    <location>
        <begin position="13"/>
        <end position="19"/>
    </location>
    <ligand>
        <name>NAD(+)</name>
        <dbReference type="ChEBI" id="CHEBI:57540"/>
    </ligand>
</feature>
<feature type="binding site" evidence="1">
    <location>
        <position position="94"/>
    </location>
    <ligand>
        <name>substrate</name>
    </ligand>
</feature>
<feature type="binding site" evidence="1">
    <location>
        <position position="100"/>
    </location>
    <ligand>
        <name>substrate</name>
    </ligand>
</feature>
<feature type="binding site" evidence="1">
    <location>
        <position position="107"/>
    </location>
    <ligand>
        <name>NAD(+)</name>
        <dbReference type="ChEBI" id="CHEBI:57540"/>
    </ligand>
</feature>
<feature type="binding site" evidence="1">
    <location>
        <position position="114"/>
    </location>
    <ligand>
        <name>NAD(+)</name>
        <dbReference type="ChEBI" id="CHEBI:57540"/>
    </ligand>
</feature>
<feature type="binding site" evidence="1">
    <location>
        <begin position="131"/>
        <end position="133"/>
    </location>
    <ligand>
        <name>NAD(+)</name>
        <dbReference type="ChEBI" id="CHEBI:57540"/>
    </ligand>
</feature>
<feature type="binding site" evidence="1">
    <location>
        <position position="133"/>
    </location>
    <ligand>
        <name>substrate</name>
    </ligand>
</feature>
<feature type="binding site" evidence="1">
    <location>
        <position position="164"/>
    </location>
    <ligand>
        <name>substrate</name>
    </ligand>
</feature>
<evidence type="ECO:0000255" key="1">
    <source>
        <dbReference type="HAMAP-Rule" id="MF_01517"/>
    </source>
</evidence>
<evidence type="ECO:0000305" key="2"/>
<keyword id="KW-0520">NAD</keyword>
<keyword id="KW-0560">Oxidoreductase</keyword>
<keyword id="KW-0816">Tricarboxylic acid cycle</keyword>
<organism>
    <name type="scientific">Chlamydia pneumoniae</name>
    <name type="common">Chlamydophila pneumoniae</name>
    <dbReference type="NCBI Taxonomy" id="83558"/>
    <lineage>
        <taxon>Bacteria</taxon>
        <taxon>Pseudomonadati</taxon>
        <taxon>Chlamydiota</taxon>
        <taxon>Chlamydiia</taxon>
        <taxon>Chlamydiales</taxon>
        <taxon>Chlamydiaceae</taxon>
        <taxon>Chlamydia/Chlamydophila group</taxon>
        <taxon>Chlamydia</taxon>
    </lineage>
</organism>
<comment type="function">
    <text evidence="1">Catalyzes the reversible oxidation of malate to oxaloacetate.</text>
</comment>
<comment type="catalytic activity">
    <reaction evidence="1">
        <text>(S)-malate + NAD(+) = oxaloacetate + NADH + H(+)</text>
        <dbReference type="Rhea" id="RHEA:21432"/>
        <dbReference type="ChEBI" id="CHEBI:15378"/>
        <dbReference type="ChEBI" id="CHEBI:15589"/>
        <dbReference type="ChEBI" id="CHEBI:16452"/>
        <dbReference type="ChEBI" id="CHEBI:57540"/>
        <dbReference type="ChEBI" id="CHEBI:57945"/>
        <dbReference type="EC" id="1.1.1.37"/>
    </reaction>
</comment>
<comment type="similarity">
    <text evidence="1">Belongs to the LDH/MDH superfamily. MDH type 2 family.</text>
</comment>
<comment type="sequence caution" evidence="2">
    <conflict type="erroneous initiation">
        <sequence resource="EMBL-CDS" id="AAP98996"/>
    </conflict>
</comment>
<accession>Q9Z6N1</accession>
<accession>Q7VPQ8</accession>
<proteinExistence type="inferred from homology"/>